<accession>Q504G0</accession>
<evidence type="ECO:0000250" key="1"/>
<evidence type="ECO:0000255" key="2"/>
<evidence type="ECO:0000256" key="3">
    <source>
        <dbReference type="SAM" id="MobiDB-lite"/>
    </source>
</evidence>
<evidence type="ECO:0000305" key="4"/>
<protein>
    <recommendedName>
        <fullName>Transmembrane protein 127</fullName>
    </recommendedName>
</protein>
<feature type="chain" id="PRO_0000360151" description="Transmembrane protein 127">
    <location>
        <begin position="1"/>
        <end position="237"/>
    </location>
</feature>
<feature type="transmembrane region" description="Helical" evidence="2">
    <location>
        <begin position="94"/>
        <end position="114"/>
    </location>
</feature>
<feature type="transmembrane region" description="Helical" evidence="2">
    <location>
        <begin position="128"/>
        <end position="148"/>
    </location>
</feature>
<feature type="transmembrane region" description="Helical" evidence="2">
    <location>
        <begin position="166"/>
        <end position="186"/>
    </location>
</feature>
<feature type="region of interest" description="Disordered" evidence="3">
    <location>
        <begin position="1"/>
        <end position="23"/>
    </location>
</feature>
<sequence>MYAPPGNAVPANRRRRGGTALPKQPERSLASALPGALSITALCTALAEPAWLRVHGGTCPRQELGVADVLGYIDDKLIDEFCINSQSILLLRVIAAFCFLGILCSLTAFLLDVFGPKHPALKITRRYAFAHILTVLQCATVIGFCYWASELILSLQQQHKKYHGSLIYVTFAISFYLVAGAGGASILATAANLLRHYPTEEEEQALELLSEMEESSETYPADYDIANQFQPPPAYTP</sequence>
<proteinExistence type="evidence at transcript level"/>
<dbReference type="EMBL" id="BX323451">
    <property type="protein sequence ID" value="CAQ13298.1"/>
    <property type="molecule type" value="Genomic_DNA"/>
</dbReference>
<dbReference type="EMBL" id="BC095039">
    <property type="protein sequence ID" value="AAH95039.1"/>
    <property type="molecule type" value="mRNA"/>
</dbReference>
<dbReference type="RefSeq" id="NP_001018360.1">
    <property type="nucleotide sequence ID" value="NM_001020524.1"/>
</dbReference>
<dbReference type="RefSeq" id="XP_005172516.1">
    <property type="nucleotide sequence ID" value="XM_005172459.3"/>
</dbReference>
<dbReference type="FunCoup" id="Q504G0">
    <property type="interactions" value="1046"/>
</dbReference>
<dbReference type="STRING" id="7955.ENSDARP00000045532"/>
<dbReference type="PaxDb" id="7955-ENSDARP00000045532"/>
<dbReference type="Ensembl" id="ENSDART00000045533">
    <property type="protein sequence ID" value="ENSDARP00000045532"/>
    <property type="gene ID" value="ENSDARG00000030981"/>
</dbReference>
<dbReference type="GeneID" id="553545"/>
<dbReference type="KEGG" id="dre:553545"/>
<dbReference type="AGR" id="ZFIN:ZDB-GENE-050522-97"/>
<dbReference type="CTD" id="55654"/>
<dbReference type="ZFIN" id="ZDB-GENE-050522-97">
    <property type="gene designation" value="tmem127"/>
</dbReference>
<dbReference type="eggNOG" id="ENOG502QTCN">
    <property type="taxonomic scope" value="Eukaryota"/>
</dbReference>
<dbReference type="InParanoid" id="Q504G0"/>
<dbReference type="OMA" id="YCINSQT"/>
<dbReference type="OrthoDB" id="10030622at2759"/>
<dbReference type="PhylomeDB" id="Q504G0"/>
<dbReference type="TreeFam" id="TF328671"/>
<dbReference type="PRO" id="PR:Q504G0"/>
<dbReference type="Proteomes" id="UP000000437">
    <property type="component" value="Chromosome 8"/>
</dbReference>
<dbReference type="Bgee" id="ENSDARG00000030981">
    <property type="expression patterns" value="Expressed in retina and 20 other cell types or tissues"/>
</dbReference>
<dbReference type="ExpressionAtlas" id="Q504G0">
    <property type="expression patterns" value="baseline and differential"/>
</dbReference>
<dbReference type="GO" id="GO:0016020">
    <property type="term" value="C:membrane"/>
    <property type="evidence" value="ECO:0000318"/>
    <property type="project" value="GO_Central"/>
</dbReference>
<dbReference type="GO" id="GO:0005886">
    <property type="term" value="C:plasma membrane"/>
    <property type="evidence" value="ECO:0007669"/>
    <property type="project" value="UniProtKB-SubCell"/>
</dbReference>
<dbReference type="GO" id="GO:0008285">
    <property type="term" value="P:negative regulation of cell population proliferation"/>
    <property type="evidence" value="ECO:0007669"/>
    <property type="project" value="InterPro"/>
</dbReference>
<dbReference type="GO" id="GO:0032007">
    <property type="term" value="P:negative regulation of TOR signaling"/>
    <property type="evidence" value="ECO:0007669"/>
    <property type="project" value="InterPro"/>
</dbReference>
<dbReference type="GO" id="GO:0032006">
    <property type="term" value="P:regulation of TOR signaling"/>
    <property type="evidence" value="ECO:0000318"/>
    <property type="project" value="GO_Central"/>
</dbReference>
<dbReference type="InterPro" id="IPR033331">
    <property type="entry name" value="TMEM127"/>
</dbReference>
<dbReference type="InterPro" id="IPR046795">
    <property type="entry name" value="TMEM127_TM"/>
</dbReference>
<dbReference type="PANTHER" id="PTHR28358">
    <property type="entry name" value="TRANSMEMBRANE PROTEIN 127"/>
    <property type="match status" value="1"/>
</dbReference>
<dbReference type="PANTHER" id="PTHR28358:SF1">
    <property type="entry name" value="TRANSMEMBRANE PROTEIN 127"/>
    <property type="match status" value="1"/>
</dbReference>
<dbReference type="Pfam" id="PF20517">
    <property type="entry name" value="TMEM127"/>
    <property type="match status" value="1"/>
</dbReference>
<comment type="function">
    <text evidence="1">Controls cell proliferation acting as a negative regulator of TOR signaling pathway mediated by mTORC1.</text>
</comment>
<comment type="subcellular location">
    <subcellularLocation>
        <location evidence="1">Cell membrane</location>
        <topology evidence="1">Multi-pass membrane protein</topology>
    </subcellularLocation>
</comment>
<comment type="similarity">
    <text evidence="4">Belongs to the TMEM127 family.</text>
</comment>
<organism>
    <name type="scientific">Danio rerio</name>
    <name type="common">Zebrafish</name>
    <name type="synonym">Brachydanio rerio</name>
    <dbReference type="NCBI Taxonomy" id="7955"/>
    <lineage>
        <taxon>Eukaryota</taxon>
        <taxon>Metazoa</taxon>
        <taxon>Chordata</taxon>
        <taxon>Craniata</taxon>
        <taxon>Vertebrata</taxon>
        <taxon>Euteleostomi</taxon>
        <taxon>Actinopterygii</taxon>
        <taxon>Neopterygii</taxon>
        <taxon>Teleostei</taxon>
        <taxon>Ostariophysi</taxon>
        <taxon>Cypriniformes</taxon>
        <taxon>Danionidae</taxon>
        <taxon>Danioninae</taxon>
        <taxon>Danio</taxon>
    </lineage>
</organism>
<reference key="1">
    <citation type="journal article" date="2013" name="Nature">
        <title>The zebrafish reference genome sequence and its relationship to the human genome.</title>
        <authorList>
            <person name="Howe K."/>
            <person name="Clark M.D."/>
            <person name="Torroja C.F."/>
            <person name="Torrance J."/>
            <person name="Berthelot C."/>
            <person name="Muffato M."/>
            <person name="Collins J.E."/>
            <person name="Humphray S."/>
            <person name="McLaren K."/>
            <person name="Matthews L."/>
            <person name="McLaren S."/>
            <person name="Sealy I."/>
            <person name="Caccamo M."/>
            <person name="Churcher C."/>
            <person name="Scott C."/>
            <person name="Barrett J.C."/>
            <person name="Koch R."/>
            <person name="Rauch G.J."/>
            <person name="White S."/>
            <person name="Chow W."/>
            <person name="Kilian B."/>
            <person name="Quintais L.T."/>
            <person name="Guerra-Assuncao J.A."/>
            <person name="Zhou Y."/>
            <person name="Gu Y."/>
            <person name="Yen J."/>
            <person name="Vogel J.H."/>
            <person name="Eyre T."/>
            <person name="Redmond S."/>
            <person name="Banerjee R."/>
            <person name="Chi J."/>
            <person name="Fu B."/>
            <person name="Langley E."/>
            <person name="Maguire S.F."/>
            <person name="Laird G.K."/>
            <person name="Lloyd D."/>
            <person name="Kenyon E."/>
            <person name="Donaldson S."/>
            <person name="Sehra H."/>
            <person name="Almeida-King J."/>
            <person name="Loveland J."/>
            <person name="Trevanion S."/>
            <person name="Jones M."/>
            <person name="Quail M."/>
            <person name="Willey D."/>
            <person name="Hunt A."/>
            <person name="Burton J."/>
            <person name="Sims S."/>
            <person name="McLay K."/>
            <person name="Plumb B."/>
            <person name="Davis J."/>
            <person name="Clee C."/>
            <person name="Oliver K."/>
            <person name="Clark R."/>
            <person name="Riddle C."/>
            <person name="Elliot D."/>
            <person name="Threadgold G."/>
            <person name="Harden G."/>
            <person name="Ware D."/>
            <person name="Begum S."/>
            <person name="Mortimore B."/>
            <person name="Kerry G."/>
            <person name="Heath P."/>
            <person name="Phillimore B."/>
            <person name="Tracey A."/>
            <person name="Corby N."/>
            <person name="Dunn M."/>
            <person name="Johnson C."/>
            <person name="Wood J."/>
            <person name="Clark S."/>
            <person name="Pelan S."/>
            <person name="Griffiths G."/>
            <person name="Smith M."/>
            <person name="Glithero R."/>
            <person name="Howden P."/>
            <person name="Barker N."/>
            <person name="Lloyd C."/>
            <person name="Stevens C."/>
            <person name="Harley J."/>
            <person name="Holt K."/>
            <person name="Panagiotidis G."/>
            <person name="Lovell J."/>
            <person name="Beasley H."/>
            <person name="Henderson C."/>
            <person name="Gordon D."/>
            <person name="Auger K."/>
            <person name="Wright D."/>
            <person name="Collins J."/>
            <person name="Raisen C."/>
            <person name="Dyer L."/>
            <person name="Leung K."/>
            <person name="Robertson L."/>
            <person name="Ambridge K."/>
            <person name="Leongamornlert D."/>
            <person name="McGuire S."/>
            <person name="Gilderthorp R."/>
            <person name="Griffiths C."/>
            <person name="Manthravadi D."/>
            <person name="Nichol S."/>
            <person name="Barker G."/>
            <person name="Whitehead S."/>
            <person name="Kay M."/>
            <person name="Brown J."/>
            <person name="Murnane C."/>
            <person name="Gray E."/>
            <person name="Humphries M."/>
            <person name="Sycamore N."/>
            <person name="Barker D."/>
            <person name="Saunders D."/>
            <person name="Wallis J."/>
            <person name="Babbage A."/>
            <person name="Hammond S."/>
            <person name="Mashreghi-Mohammadi M."/>
            <person name="Barr L."/>
            <person name="Martin S."/>
            <person name="Wray P."/>
            <person name="Ellington A."/>
            <person name="Matthews N."/>
            <person name="Ellwood M."/>
            <person name="Woodmansey R."/>
            <person name="Clark G."/>
            <person name="Cooper J."/>
            <person name="Tromans A."/>
            <person name="Grafham D."/>
            <person name="Skuce C."/>
            <person name="Pandian R."/>
            <person name="Andrews R."/>
            <person name="Harrison E."/>
            <person name="Kimberley A."/>
            <person name="Garnett J."/>
            <person name="Fosker N."/>
            <person name="Hall R."/>
            <person name="Garner P."/>
            <person name="Kelly D."/>
            <person name="Bird C."/>
            <person name="Palmer S."/>
            <person name="Gehring I."/>
            <person name="Berger A."/>
            <person name="Dooley C.M."/>
            <person name="Ersan-Urun Z."/>
            <person name="Eser C."/>
            <person name="Geiger H."/>
            <person name="Geisler M."/>
            <person name="Karotki L."/>
            <person name="Kirn A."/>
            <person name="Konantz J."/>
            <person name="Konantz M."/>
            <person name="Oberlander M."/>
            <person name="Rudolph-Geiger S."/>
            <person name="Teucke M."/>
            <person name="Lanz C."/>
            <person name="Raddatz G."/>
            <person name="Osoegawa K."/>
            <person name="Zhu B."/>
            <person name="Rapp A."/>
            <person name="Widaa S."/>
            <person name="Langford C."/>
            <person name="Yang F."/>
            <person name="Schuster S.C."/>
            <person name="Carter N.P."/>
            <person name="Harrow J."/>
            <person name="Ning Z."/>
            <person name="Herrero J."/>
            <person name="Searle S.M."/>
            <person name="Enright A."/>
            <person name="Geisler R."/>
            <person name="Plasterk R.H."/>
            <person name="Lee C."/>
            <person name="Westerfield M."/>
            <person name="de Jong P.J."/>
            <person name="Zon L.I."/>
            <person name="Postlethwait J.H."/>
            <person name="Nusslein-Volhard C."/>
            <person name="Hubbard T.J."/>
            <person name="Roest Crollius H."/>
            <person name="Rogers J."/>
            <person name="Stemple D.L."/>
        </authorList>
    </citation>
    <scope>NUCLEOTIDE SEQUENCE [LARGE SCALE GENOMIC DNA]</scope>
    <source>
        <strain>Tuebingen</strain>
    </source>
</reference>
<reference key="2">
    <citation type="submission" date="2005-05" db="EMBL/GenBank/DDBJ databases">
        <authorList>
            <consortium name="NIH - Zebrafish Gene Collection (ZGC) project"/>
        </authorList>
    </citation>
    <scope>NUCLEOTIDE SEQUENCE [LARGE SCALE MRNA]</scope>
    <source>
        <tissue>Embryo</tissue>
    </source>
</reference>
<gene>
    <name type="primary">tmem127</name>
    <name type="ORF">si:dkey-49h9.5</name>
    <name type="ORF">zgc:109899</name>
</gene>
<name>TM127_DANRE</name>
<keyword id="KW-1003">Cell membrane</keyword>
<keyword id="KW-0472">Membrane</keyword>
<keyword id="KW-1185">Reference proteome</keyword>
<keyword id="KW-0812">Transmembrane</keyword>
<keyword id="KW-1133">Transmembrane helix</keyword>